<gene>
    <name type="primary">htpX</name>
    <name type="ordered locus">FN0920</name>
</gene>
<accession>Q8R664</accession>
<feature type="chain" id="PRO_0000138863" description="Protease HtpX homolog">
    <location>
        <begin position="1"/>
        <end position="309"/>
    </location>
</feature>
<feature type="transmembrane region" description="Helical" evidence="2">
    <location>
        <begin position="22"/>
        <end position="42"/>
    </location>
</feature>
<feature type="transmembrane region" description="Helical" evidence="2">
    <location>
        <begin position="46"/>
        <end position="66"/>
    </location>
</feature>
<feature type="active site" evidence="3">
    <location>
        <position position="156"/>
    </location>
</feature>
<feature type="binding site" evidence="3">
    <location>
        <position position="155"/>
    </location>
    <ligand>
        <name>Zn(2+)</name>
        <dbReference type="ChEBI" id="CHEBI:29105"/>
        <note>catalytic</note>
    </ligand>
</feature>
<feature type="binding site" evidence="3">
    <location>
        <position position="159"/>
    </location>
    <ligand>
        <name>Zn(2+)</name>
        <dbReference type="ChEBI" id="CHEBI:29105"/>
        <note>catalytic</note>
    </ligand>
</feature>
<feature type="binding site" evidence="3">
    <location>
        <position position="228"/>
    </location>
    <ligand>
        <name>Zn(2+)</name>
        <dbReference type="ChEBI" id="CHEBI:29105"/>
        <note>catalytic</note>
    </ligand>
</feature>
<proteinExistence type="inferred from homology"/>
<comment type="cofactor">
    <cofactor evidence="1">
        <name>Zn(2+)</name>
        <dbReference type="ChEBI" id="CHEBI:29105"/>
    </cofactor>
    <text evidence="1">Binds 1 zinc ion per subunit.</text>
</comment>
<comment type="subcellular location">
    <subcellularLocation>
        <location evidence="1">Cell inner membrane</location>
        <topology evidence="1">Multi-pass membrane protein</topology>
    </subcellularLocation>
</comment>
<comment type="similarity">
    <text evidence="4">Belongs to the peptidase M48B family.</text>
</comment>
<dbReference type="EC" id="3.4.24.-"/>
<dbReference type="EMBL" id="AE009951">
    <property type="protein sequence ID" value="AAL95116.1"/>
    <property type="molecule type" value="Genomic_DNA"/>
</dbReference>
<dbReference type="RefSeq" id="NP_603817.1">
    <property type="nucleotide sequence ID" value="NC_003454.1"/>
</dbReference>
<dbReference type="RefSeq" id="WP_011016752.1">
    <property type="nucleotide sequence ID" value="NZ_OZ209243.1"/>
</dbReference>
<dbReference type="FunCoup" id="Q8R664">
    <property type="interactions" value="134"/>
</dbReference>
<dbReference type="STRING" id="190304.FN0920"/>
<dbReference type="PaxDb" id="190304-FN0920"/>
<dbReference type="EnsemblBacteria" id="AAL95116">
    <property type="protein sequence ID" value="AAL95116"/>
    <property type="gene ID" value="FN0920"/>
</dbReference>
<dbReference type="KEGG" id="fnu:FN0920"/>
<dbReference type="PATRIC" id="fig|190304.8.peg.1483"/>
<dbReference type="eggNOG" id="COG0501">
    <property type="taxonomic scope" value="Bacteria"/>
</dbReference>
<dbReference type="HOGENOM" id="CLU_042266_1_0_0"/>
<dbReference type="InParanoid" id="Q8R664"/>
<dbReference type="BioCyc" id="FNUC190304:G1FZS-1502-MONOMER"/>
<dbReference type="Proteomes" id="UP000002521">
    <property type="component" value="Chromosome"/>
</dbReference>
<dbReference type="GO" id="GO:0005886">
    <property type="term" value="C:plasma membrane"/>
    <property type="evidence" value="ECO:0007669"/>
    <property type="project" value="UniProtKB-SubCell"/>
</dbReference>
<dbReference type="GO" id="GO:0046872">
    <property type="term" value="F:metal ion binding"/>
    <property type="evidence" value="ECO:0007669"/>
    <property type="project" value="UniProtKB-KW"/>
</dbReference>
<dbReference type="GO" id="GO:0004222">
    <property type="term" value="F:metalloendopeptidase activity"/>
    <property type="evidence" value="ECO:0007669"/>
    <property type="project" value="InterPro"/>
</dbReference>
<dbReference type="GO" id="GO:0006508">
    <property type="term" value="P:proteolysis"/>
    <property type="evidence" value="ECO:0007669"/>
    <property type="project" value="UniProtKB-KW"/>
</dbReference>
<dbReference type="CDD" id="cd07335">
    <property type="entry name" value="M48B_HtpX_like"/>
    <property type="match status" value="1"/>
</dbReference>
<dbReference type="Gene3D" id="3.30.2010.10">
    <property type="entry name" value="Metalloproteases ('zincins'), catalytic domain"/>
    <property type="match status" value="1"/>
</dbReference>
<dbReference type="InterPro" id="IPR050083">
    <property type="entry name" value="HtpX_protease"/>
</dbReference>
<dbReference type="InterPro" id="IPR001915">
    <property type="entry name" value="Peptidase_M48"/>
</dbReference>
<dbReference type="PANTHER" id="PTHR43221">
    <property type="entry name" value="PROTEASE HTPX"/>
    <property type="match status" value="1"/>
</dbReference>
<dbReference type="PANTHER" id="PTHR43221:SF1">
    <property type="entry name" value="PROTEASE HTPX"/>
    <property type="match status" value="1"/>
</dbReference>
<dbReference type="Pfam" id="PF01435">
    <property type="entry name" value="Peptidase_M48"/>
    <property type="match status" value="1"/>
</dbReference>
<dbReference type="PROSITE" id="PS00142">
    <property type="entry name" value="ZINC_PROTEASE"/>
    <property type="match status" value="1"/>
</dbReference>
<name>HTPX_FUSNN</name>
<evidence type="ECO:0000250" key="1"/>
<evidence type="ECO:0000255" key="2"/>
<evidence type="ECO:0000255" key="3">
    <source>
        <dbReference type="PROSITE-ProRule" id="PRU10095"/>
    </source>
</evidence>
<evidence type="ECO:0000305" key="4"/>
<reference key="1">
    <citation type="journal article" date="2002" name="J. Bacteriol.">
        <title>Genome sequence and analysis of the oral bacterium Fusobacterium nucleatum strain ATCC 25586.</title>
        <authorList>
            <person name="Kapatral V."/>
            <person name="Anderson I."/>
            <person name="Ivanova N."/>
            <person name="Reznik G."/>
            <person name="Los T."/>
            <person name="Lykidis A."/>
            <person name="Bhattacharyya A."/>
            <person name="Bartman A."/>
            <person name="Gardner W."/>
            <person name="Grechkin G."/>
            <person name="Zhu L."/>
            <person name="Vasieva O."/>
            <person name="Chu L."/>
            <person name="Kogan Y."/>
            <person name="Chaga O."/>
            <person name="Goltsman E."/>
            <person name="Bernal A."/>
            <person name="Larsen N."/>
            <person name="D'Souza M."/>
            <person name="Walunas T."/>
            <person name="Pusch G."/>
            <person name="Haselkorn R."/>
            <person name="Fonstein M."/>
            <person name="Kyrpides N.C."/>
            <person name="Overbeek R."/>
        </authorList>
    </citation>
    <scope>NUCLEOTIDE SEQUENCE [LARGE SCALE GENOMIC DNA]</scope>
    <source>
        <strain>ATCC 25586 / DSM 15643 / BCRC 10681 / CIP 101130 / JCM 8532 / KCTC 2640 / LMG 13131 / VPI 4355</strain>
    </source>
</reference>
<protein>
    <recommendedName>
        <fullName>Protease HtpX homolog</fullName>
        <ecNumber>3.4.24.-</ecNumber>
    </recommendedName>
</protein>
<sequence length="309" mass="34063">MKGLAELKNKIVKAPHLNIFKIGTWVTMGLFATFLLVYIFVGDEMLNYYPLLILFAFGTPFISLMISKATVKRAYNIRMIGDGGASTEKEKLVVDTVTLLSQKLDLQKFPEIGVYPSNDINAFATGASKNSAMVAVSQGLLNSMNETEIIGVLAHEMSHVVNGDMLTSSILEGFVSAFGVIATLPFLMGENNNRGRRAASSMATYYMVRNVANIFGKIVSSAYSRRREYGADKLAAEITDPSYMKSALLRLQEISEGRISLQNSDREFASFKITNNFSMGNIFGNLFASHPSLAKRIAAIERMEKTTKK</sequence>
<organism>
    <name type="scientific">Fusobacterium nucleatum subsp. nucleatum (strain ATCC 25586 / DSM 15643 / BCRC 10681 / CIP 101130 / JCM 8532 / KCTC 2640 / LMG 13131 / VPI 4355)</name>
    <dbReference type="NCBI Taxonomy" id="190304"/>
    <lineage>
        <taxon>Bacteria</taxon>
        <taxon>Fusobacteriati</taxon>
        <taxon>Fusobacteriota</taxon>
        <taxon>Fusobacteriia</taxon>
        <taxon>Fusobacteriales</taxon>
        <taxon>Fusobacteriaceae</taxon>
        <taxon>Fusobacterium</taxon>
    </lineage>
</organism>
<keyword id="KW-0997">Cell inner membrane</keyword>
<keyword id="KW-1003">Cell membrane</keyword>
<keyword id="KW-0378">Hydrolase</keyword>
<keyword id="KW-0472">Membrane</keyword>
<keyword id="KW-0479">Metal-binding</keyword>
<keyword id="KW-0482">Metalloprotease</keyword>
<keyword id="KW-0645">Protease</keyword>
<keyword id="KW-1185">Reference proteome</keyword>
<keyword id="KW-0812">Transmembrane</keyword>
<keyword id="KW-1133">Transmembrane helix</keyword>
<keyword id="KW-0862">Zinc</keyword>